<gene>
    <name evidence="1" type="primary">rpsR</name>
    <name type="ordered locus">BcerKBAB4_5265</name>
</gene>
<dbReference type="EMBL" id="CP000903">
    <property type="protein sequence ID" value="ABY46408.1"/>
    <property type="molecule type" value="Genomic_DNA"/>
</dbReference>
<dbReference type="RefSeq" id="WP_000918874.1">
    <property type="nucleotide sequence ID" value="NZ_CAKMRX030000123.1"/>
</dbReference>
<dbReference type="SMR" id="A9VTK8"/>
<dbReference type="GeneID" id="92885945"/>
<dbReference type="KEGG" id="bwe:BcerKBAB4_5265"/>
<dbReference type="eggNOG" id="COG0238">
    <property type="taxonomic scope" value="Bacteria"/>
</dbReference>
<dbReference type="HOGENOM" id="CLU_148710_2_2_9"/>
<dbReference type="Proteomes" id="UP000002154">
    <property type="component" value="Chromosome"/>
</dbReference>
<dbReference type="GO" id="GO:0022627">
    <property type="term" value="C:cytosolic small ribosomal subunit"/>
    <property type="evidence" value="ECO:0007669"/>
    <property type="project" value="TreeGrafter"/>
</dbReference>
<dbReference type="GO" id="GO:0070181">
    <property type="term" value="F:small ribosomal subunit rRNA binding"/>
    <property type="evidence" value="ECO:0007669"/>
    <property type="project" value="TreeGrafter"/>
</dbReference>
<dbReference type="GO" id="GO:0003735">
    <property type="term" value="F:structural constituent of ribosome"/>
    <property type="evidence" value="ECO:0007669"/>
    <property type="project" value="InterPro"/>
</dbReference>
<dbReference type="GO" id="GO:0006412">
    <property type="term" value="P:translation"/>
    <property type="evidence" value="ECO:0007669"/>
    <property type="project" value="UniProtKB-UniRule"/>
</dbReference>
<dbReference type="FunFam" id="4.10.640.10:FF:000003">
    <property type="entry name" value="30S ribosomal protein S18"/>
    <property type="match status" value="1"/>
</dbReference>
<dbReference type="Gene3D" id="4.10.640.10">
    <property type="entry name" value="Ribosomal protein S18"/>
    <property type="match status" value="1"/>
</dbReference>
<dbReference type="HAMAP" id="MF_00270">
    <property type="entry name" value="Ribosomal_bS18"/>
    <property type="match status" value="1"/>
</dbReference>
<dbReference type="InterPro" id="IPR001648">
    <property type="entry name" value="Ribosomal_bS18"/>
</dbReference>
<dbReference type="InterPro" id="IPR018275">
    <property type="entry name" value="Ribosomal_bS18_CS"/>
</dbReference>
<dbReference type="InterPro" id="IPR036870">
    <property type="entry name" value="Ribosomal_bS18_sf"/>
</dbReference>
<dbReference type="NCBIfam" id="TIGR00165">
    <property type="entry name" value="S18"/>
    <property type="match status" value="1"/>
</dbReference>
<dbReference type="PANTHER" id="PTHR13479">
    <property type="entry name" value="30S RIBOSOMAL PROTEIN S18"/>
    <property type="match status" value="1"/>
</dbReference>
<dbReference type="PANTHER" id="PTHR13479:SF40">
    <property type="entry name" value="SMALL RIBOSOMAL SUBUNIT PROTEIN BS18M"/>
    <property type="match status" value="1"/>
</dbReference>
<dbReference type="Pfam" id="PF01084">
    <property type="entry name" value="Ribosomal_S18"/>
    <property type="match status" value="1"/>
</dbReference>
<dbReference type="PRINTS" id="PR00974">
    <property type="entry name" value="RIBOSOMALS18"/>
</dbReference>
<dbReference type="SUPFAM" id="SSF46911">
    <property type="entry name" value="Ribosomal protein S18"/>
    <property type="match status" value="1"/>
</dbReference>
<dbReference type="PROSITE" id="PS00057">
    <property type="entry name" value="RIBOSOMAL_S18"/>
    <property type="match status" value="1"/>
</dbReference>
<accession>A9VTK8</accession>
<feature type="chain" id="PRO_1000114397" description="Small ribosomal subunit protein bS18">
    <location>
        <begin position="1"/>
        <end position="77"/>
    </location>
</feature>
<reference key="1">
    <citation type="journal article" date="2008" name="Chem. Biol. Interact.">
        <title>Extending the Bacillus cereus group genomics to putative food-borne pathogens of different toxicity.</title>
        <authorList>
            <person name="Lapidus A."/>
            <person name="Goltsman E."/>
            <person name="Auger S."/>
            <person name="Galleron N."/>
            <person name="Segurens B."/>
            <person name="Dossat C."/>
            <person name="Land M.L."/>
            <person name="Broussolle V."/>
            <person name="Brillard J."/>
            <person name="Guinebretiere M.-H."/>
            <person name="Sanchis V."/>
            <person name="Nguen-the C."/>
            <person name="Lereclus D."/>
            <person name="Richardson P."/>
            <person name="Wincker P."/>
            <person name="Weissenbach J."/>
            <person name="Ehrlich S.D."/>
            <person name="Sorokin A."/>
        </authorList>
    </citation>
    <scope>NUCLEOTIDE SEQUENCE [LARGE SCALE GENOMIC DNA]</scope>
    <source>
        <strain>KBAB4</strain>
    </source>
</reference>
<comment type="function">
    <text evidence="1">Binds as a heterodimer with protein bS6 to the central domain of the 16S rRNA, where it helps stabilize the platform of the 30S subunit.</text>
</comment>
<comment type="subunit">
    <text evidence="1">Part of the 30S ribosomal subunit. Forms a tight heterodimer with protein bS6.</text>
</comment>
<comment type="similarity">
    <text evidence="1">Belongs to the bacterial ribosomal protein bS18 family.</text>
</comment>
<name>RS18_BACMK</name>
<sequence length="77" mass="8829">MAGRKGGRAKRRKVCFFTSNGITRIDYKDVDLLKRFVSERGKILPRRVTGTSAKYQRKLTVAIKRARQMALLPYVGE</sequence>
<organism>
    <name type="scientific">Bacillus mycoides (strain KBAB4)</name>
    <name type="common">Bacillus weihenstephanensis</name>
    <dbReference type="NCBI Taxonomy" id="315730"/>
    <lineage>
        <taxon>Bacteria</taxon>
        <taxon>Bacillati</taxon>
        <taxon>Bacillota</taxon>
        <taxon>Bacilli</taxon>
        <taxon>Bacillales</taxon>
        <taxon>Bacillaceae</taxon>
        <taxon>Bacillus</taxon>
        <taxon>Bacillus cereus group</taxon>
    </lineage>
</organism>
<evidence type="ECO:0000255" key="1">
    <source>
        <dbReference type="HAMAP-Rule" id="MF_00270"/>
    </source>
</evidence>
<evidence type="ECO:0000305" key="2"/>
<proteinExistence type="inferred from homology"/>
<protein>
    <recommendedName>
        <fullName evidence="1">Small ribosomal subunit protein bS18</fullName>
    </recommendedName>
    <alternativeName>
        <fullName evidence="2">30S ribosomal protein S18</fullName>
    </alternativeName>
</protein>
<keyword id="KW-0687">Ribonucleoprotein</keyword>
<keyword id="KW-0689">Ribosomal protein</keyword>
<keyword id="KW-0694">RNA-binding</keyword>
<keyword id="KW-0699">rRNA-binding</keyword>